<protein>
    <recommendedName>
        <fullName evidence="1">Protein translocase subunit SecA</fullName>
        <ecNumber evidence="1">7.4.2.8</ecNumber>
    </recommendedName>
</protein>
<reference key="1">
    <citation type="journal article" date="2004" name="Nat. Genet.">
        <title>Comparison of genome degradation in Paratyphi A and Typhi, human-restricted serovars of Salmonella enterica that cause typhoid.</title>
        <authorList>
            <person name="McClelland M."/>
            <person name="Sanderson K.E."/>
            <person name="Clifton S.W."/>
            <person name="Latreille P."/>
            <person name="Porwollik S."/>
            <person name="Sabo A."/>
            <person name="Meyer R."/>
            <person name="Bieri T."/>
            <person name="Ozersky P."/>
            <person name="McLellan M."/>
            <person name="Harkins C.R."/>
            <person name="Wang C."/>
            <person name="Nguyen C."/>
            <person name="Berghoff A."/>
            <person name="Elliott G."/>
            <person name="Kohlberg S."/>
            <person name="Strong C."/>
            <person name="Du F."/>
            <person name="Carter J."/>
            <person name="Kremizki C."/>
            <person name="Layman D."/>
            <person name="Leonard S."/>
            <person name="Sun H."/>
            <person name="Fulton L."/>
            <person name="Nash W."/>
            <person name="Miner T."/>
            <person name="Minx P."/>
            <person name="Delehaunty K."/>
            <person name="Fronick C."/>
            <person name="Magrini V."/>
            <person name="Nhan M."/>
            <person name="Warren W."/>
            <person name="Florea L."/>
            <person name="Spieth J."/>
            <person name="Wilson R.K."/>
        </authorList>
    </citation>
    <scope>NUCLEOTIDE SEQUENCE [LARGE SCALE GENOMIC DNA]</scope>
    <source>
        <strain>ATCC 9150 / SARB42</strain>
    </source>
</reference>
<organism>
    <name type="scientific">Salmonella paratyphi A (strain ATCC 9150 / SARB42)</name>
    <dbReference type="NCBI Taxonomy" id="295319"/>
    <lineage>
        <taxon>Bacteria</taxon>
        <taxon>Pseudomonadati</taxon>
        <taxon>Pseudomonadota</taxon>
        <taxon>Gammaproteobacteria</taxon>
        <taxon>Enterobacterales</taxon>
        <taxon>Enterobacteriaceae</taxon>
        <taxon>Salmonella</taxon>
    </lineage>
</organism>
<evidence type="ECO:0000255" key="1">
    <source>
        <dbReference type="HAMAP-Rule" id="MF_01382"/>
    </source>
</evidence>
<sequence length="901" mass="101842">MLIKLLTKVFGSRNDRTLRRMRKAVSLINAMEPEMEKLSDDELKAKTNEFRARIEKGESVESLIPEAFAVVREASKRVFGMRHFDVQLLGGMVLNDRCIAEMRTGEGKTLTATLPAYLNALSGKGVHVVTVNDYLAQRDAENNRPLFEFLGMSVGINLPGMPAPAKREAYAADITYGTNNEYGFDYLRDNMAFSPEERVQRKLHYALVDEVDSILIDEARTPLIISGPAEDSSEMYKKVNKIIPHLIRQEKEDSDTFQGEGHFSVDEKARQVNLTERGLVLIEELLVQEGIMDEGESLYSPGNIMLMHHVTAALRAHALFTRDVDYIVKDGEVIIVDEHTGRTMQGRRWSDGLHQAVEAKEGVEIQNENQTLASITFQNYFRLYEKLAGMTGTADTEAFEFSSIYKLDTVVVPTNRPMIRKDLPDLVYMTEAEKIQAIIEDIKERTANGQPVLVGTISIEKSEVVSRELTKAGIKHNVLNAKFHANEAGIVAQAGYPAAVTIATNMAGRGTDIMLGGSWQAEVAALEAPTEEQIAQIKADWQVRHDAVLAAGGLHIIGTERHESRRIDNQLRGRSGRQGDPGSSRFYLSMEDALMRIFASDRVSGMMRKLGMKPGEAIEHPWVTKAIANAQRKVESRNFDIRKQLLEYDDVANDQRRAIYTQRNELLDVSDVSDTINSIREDVFKATIDAYIPPQSLEEMWDILGLQERLKNDFDLEMPIAEWLDKEPELHEETLRERILAQSIEVYQRKEEVVGAEMMRHFEKGVMLQTLDSLWKEHLAAMDYLRQGIHLRGYAQKDPKQEYKRESFAMFAAMLESLKYEVISTLSKVQVRMPEEVEAMEMQRREEAERLAQMQQLSHQDDDAAVAADLAAQTGERKIGRNDPCPCGSGKKYKQCHGRLS</sequence>
<gene>
    <name evidence="1" type="primary">secA</name>
    <name type="ordered locus">SPA0138</name>
</gene>
<dbReference type="EC" id="7.4.2.8" evidence="1"/>
<dbReference type="EMBL" id="CP000026">
    <property type="protein sequence ID" value="AAV76171.1"/>
    <property type="molecule type" value="Genomic_DNA"/>
</dbReference>
<dbReference type="RefSeq" id="WP_000905752.1">
    <property type="nucleotide sequence ID" value="NC_006511.1"/>
</dbReference>
<dbReference type="SMR" id="Q5PDC9"/>
<dbReference type="KEGG" id="spt:SPA0138"/>
<dbReference type="HOGENOM" id="CLU_005314_3_0_6"/>
<dbReference type="Proteomes" id="UP000008185">
    <property type="component" value="Chromosome"/>
</dbReference>
<dbReference type="GO" id="GO:0031522">
    <property type="term" value="C:cell envelope Sec protein transport complex"/>
    <property type="evidence" value="ECO:0007669"/>
    <property type="project" value="TreeGrafter"/>
</dbReference>
<dbReference type="GO" id="GO:0005829">
    <property type="term" value="C:cytosol"/>
    <property type="evidence" value="ECO:0007669"/>
    <property type="project" value="TreeGrafter"/>
</dbReference>
<dbReference type="GO" id="GO:0005886">
    <property type="term" value="C:plasma membrane"/>
    <property type="evidence" value="ECO:0007669"/>
    <property type="project" value="UniProtKB-SubCell"/>
</dbReference>
<dbReference type="GO" id="GO:0005524">
    <property type="term" value="F:ATP binding"/>
    <property type="evidence" value="ECO:0007669"/>
    <property type="project" value="UniProtKB-UniRule"/>
</dbReference>
<dbReference type="GO" id="GO:0046872">
    <property type="term" value="F:metal ion binding"/>
    <property type="evidence" value="ECO:0007669"/>
    <property type="project" value="UniProtKB-KW"/>
</dbReference>
<dbReference type="GO" id="GO:0008564">
    <property type="term" value="F:protein-exporting ATPase activity"/>
    <property type="evidence" value="ECO:0007669"/>
    <property type="project" value="UniProtKB-EC"/>
</dbReference>
<dbReference type="GO" id="GO:0065002">
    <property type="term" value="P:intracellular protein transmembrane transport"/>
    <property type="evidence" value="ECO:0007669"/>
    <property type="project" value="UniProtKB-UniRule"/>
</dbReference>
<dbReference type="GO" id="GO:0017038">
    <property type="term" value="P:protein import"/>
    <property type="evidence" value="ECO:0007669"/>
    <property type="project" value="InterPro"/>
</dbReference>
<dbReference type="GO" id="GO:0006605">
    <property type="term" value="P:protein targeting"/>
    <property type="evidence" value="ECO:0007669"/>
    <property type="project" value="UniProtKB-UniRule"/>
</dbReference>
<dbReference type="GO" id="GO:0043952">
    <property type="term" value="P:protein transport by the Sec complex"/>
    <property type="evidence" value="ECO:0007669"/>
    <property type="project" value="TreeGrafter"/>
</dbReference>
<dbReference type="CDD" id="cd17928">
    <property type="entry name" value="DEXDc_SecA"/>
    <property type="match status" value="1"/>
</dbReference>
<dbReference type="CDD" id="cd18803">
    <property type="entry name" value="SF2_C_secA"/>
    <property type="match status" value="1"/>
</dbReference>
<dbReference type="FunFam" id="1.10.3060.10:FF:000001">
    <property type="entry name" value="Preprotein translocase subunit SecA"/>
    <property type="match status" value="1"/>
</dbReference>
<dbReference type="FunFam" id="3.40.50.300:FF:000081">
    <property type="entry name" value="Preprotein translocase subunit SecA"/>
    <property type="match status" value="1"/>
</dbReference>
<dbReference type="FunFam" id="3.40.50.300:FF:000113">
    <property type="entry name" value="Preprotein translocase subunit SecA"/>
    <property type="match status" value="1"/>
</dbReference>
<dbReference type="FunFam" id="3.90.1440.10:FF:000001">
    <property type="entry name" value="Preprotein translocase subunit SecA"/>
    <property type="match status" value="1"/>
</dbReference>
<dbReference type="Gene3D" id="1.10.3060.10">
    <property type="entry name" value="Helical scaffold and wing domains of SecA"/>
    <property type="match status" value="1"/>
</dbReference>
<dbReference type="Gene3D" id="3.40.50.300">
    <property type="entry name" value="P-loop containing nucleotide triphosphate hydrolases"/>
    <property type="match status" value="2"/>
</dbReference>
<dbReference type="Gene3D" id="3.90.1440.10">
    <property type="entry name" value="SecA, preprotein cross-linking domain"/>
    <property type="match status" value="1"/>
</dbReference>
<dbReference type="HAMAP" id="MF_01382">
    <property type="entry name" value="SecA"/>
    <property type="match status" value="1"/>
</dbReference>
<dbReference type="InterPro" id="IPR014001">
    <property type="entry name" value="Helicase_ATP-bd"/>
</dbReference>
<dbReference type="InterPro" id="IPR027417">
    <property type="entry name" value="P-loop_NTPase"/>
</dbReference>
<dbReference type="InterPro" id="IPR004027">
    <property type="entry name" value="SEC_C_motif"/>
</dbReference>
<dbReference type="InterPro" id="IPR000185">
    <property type="entry name" value="SecA"/>
</dbReference>
<dbReference type="InterPro" id="IPR020937">
    <property type="entry name" value="SecA_CS"/>
</dbReference>
<dbReference type="InterPro" id="IPR011115">
    <property type="entry name" value="SecA_DEAD"/>
</dbReference>
<dbReference type="InterPro" id="IPR014018">
    <property type="entry name" value="SecA_motor_DEAD"/>
</dbReference>
<dbReference type="InterPro" id="IPR011130">
    <property type="entry name" value="SecA_preprotein_X-link_dom"/>
</dbReference>
<dbReference type="InterPro" id="IPR044722">
    <property type="entry name" value="SecA_SF2_C"/>
</dbReference>
<dbReference type="InterPro" id="IPR011116">
    <property type="entry name" value="SecA_Wing/Scaffold"/>
</dbReference>
<dbReference type="InterPro" id="IPR036266">
    <property type="entry name" value="SecA_Wing/Scaffold_sf"/>
</dbReference>
<dbReference type="InterPro" id="IPR036670">
    <property type="entry name" value="SecA_X-link_sf"/>
</dbReference>
<dbReference type="NCBIfam" id="NF009538">
    <property type="entry name" value="PRK12904.1"/>
    <property type="match status" value="1"/>
</dbReference>
<dbReference type="NCBIfam" id="TIGR00963">
    <property type="entry name" value="secA"/>
    <property type="match status" value="1"/>
</dbReference>
<dbReference type="PANTHER" id="PTHR30612:SF0">
    <property type="entry name" value="CHLOROPLAST PROTEIN-TRANSPORTING ATPASE"/>
    <property type="match status" value="1"/>
</dbReference>
<dbReference type="PANTHER" id="PTHR30612">
    <property type="entry name" value="SECA INNER MEMBRANE COMPONENT OF SEC PROTEIN SECRETION SYSTEM"/>
    <property type="match status" value="1"/>
</dbReference>
<dbReference type="Pfam" id="PF21090">
    <property type="entry name" value="P-loop_SecA"/>
    <property type="match status" value="1"/>
</dbReference>
<dbReference type="Pfam" id="PF02810">
    <property type="entry name" value="SEC-C"/>
    <property type="match status" value="1"/>
</dbReference>
<dbReference type="Pfam" id="PF07517">
    <property type="entry name" value="SecA_DEAD"/>
    <property type="match status" value="1"/>
</dbReference>
<dbReference type="Pfam" id="PF01043">
    <property type="entry name" value="SecA_PP_bind"/>
    <property type="match status" value="1"/>
</dbReference>
<dbReference type="Pfam" id="PF07516">
    <property type="entry name" value="SecA_SW"/>
    <property type="match status" value="1"/>
</dbReference>
<dbReference type="PRINTS" id="PR00906">
    <property type="entry name" value="SECA"/>
</dbReference>
<dbReference type="SMART" id="SM00957">
    <property type="entry name" value="SecA_DEAD"/>
    <property type="match status" value="1"/>
</dbReference>
<dbReference type="SMART" id="SM00958">
    <property type="entry name" value="SecA_PP_bind"/>
    <property type="match status" value="1"/>
</dbReference>
<dbReference type="SUPFAM" id="SSF81886">
    <property type="entry name" value="Helical scaffold and wing domains of SecA"/>
    <property type="match status" value="1"/>
</dbReference>
<dbReference type="SUPFAM" id="SSF52540">
    <property type="entry name" value="P-loop containing nucleoside triphosphate hydrolases"/>
    <property type="match status" value="2"/>
</dbReference>
<dbReference type="SUPFAM" id="SSF81767">
    <property type="entry name" value="Pre-protein crosslinking domain of SecA"/>
    <property type="match status" value="1"/>
</dbReference>
<dbReference type="PROSITE" id="PS01312">
    <property type="entry name" value="SECA"/>
    <property type="match status" value="1"/>
</dbReference>
<dbReference type="PROSITE" id="PS51196">
    <property type="entry name" value="SECA_MOTOR_DEAD"/>
    <property type="match status" value="1"/>
</dbReference>
<accession>Q5PDC9</accession>
<proteinExistence type="inferred from homology"/>
<keyword id="KW-0067">ATP-binding</keyword>
<keyword id="KW-0997">Cell inner membrane</keyword>
<keyword id="KW-1003">Cell membrane</keyword>
<keyword id="KW-0963">Cytoplasm</keyword>
<keyword id="KW-0472">Membrane</keyword>
<keyword id="KW-0479">Metal-binding</keyword>
<keyword id="KW-0547">Nucleotide-binding</keyword>
<keyword id="KW-0653">Protein transport</keyword>
<keyword id="KW-1278">Translocase</keyword>
<keyword id="KW-0811">Translocation</keyword>
<keyword id="KW-0813">Transport</keyword>
<keyword id="KW-0862">Zinc</keyword>
<name>SECA_SALPA</name>
<feature type="chain" id="PRO_0000320985" description="Protein translocase subunit SecA">
    <location>
        <begin position="1"/>
        <end position="901"/>
    </location>
</feature>
<feature type="binding site" evidence="1">
    <location>
        <position position="87"/>
    </location>
    <ligand>
        <name>ATP</name>
        <dbReference type="ChEBI" id="CHEBI:30616"/>
    </ligand>
</feature>
<feature type="binding site" evidence="1">
    <location>
        <begin position="105"/>
        <end position="109"/>
    </location>
    <ligand>
        <name>ATP</name>
        <dbReference type="ChEBI" id="CHEBI:30616"/>
    </ligand>
</feature>
<feature type="binding site" evidence="1">
    <location>
        <position position="512"/>
    </location>
    <ligand>
        <name>ATP</name>
        <dbReference type="ChEBI" id="CHEBI:30616"/>
    </ligand>
</feature>
<feature type="binding site" evidence="1">
    <location>
        <position position="885"/>
    </location>
    <ligand>
        <name>Zn(2+)</name>
        <dbReference type="ChEBI" id="CHEBI:29105"/>
    </ligand>
</feature>
<feature type="binding site" evidence="1">
    <location>
        <position position="887"/>
    </location>
    <ligand>
        <name>Zn(2+)</name>
        <dbReference type="ChEBI" id="CHEBI:29105"/>
    </ligand>
</feature>
<feature type="binding site" evidence="1">
    <location>
        <position position="896"/>
    </location>
    <ligand>
        <name>Zn(2+)</name>
        <dbReference type="ChEBI" id="CHEBI:29105"/>
    </ligand>
</feature>
<feature type="binding site" evidence="1">
    <location>
        <position position="897"/>
    </location>
    <ligand>
        <name>Zn(2+)</name>
        <dbReference type="ChEBI" id="CHEBI:29105"/>
    </ligand>
</feature>
<comment type="function">
    <text evidence="1">Part of the Sec protein translocase complex. Interacts with the SecYEG preprotein conducting channel. Has a central role in coupling the hydrolysis of ATP to the transfer of proteins into and across the cell membrane, serving both as a receptor for the preprotein-SecB complex and as an ATP-driven molecular motor driving the stepwise translocation of polypeptide chains across the membrane.</text>
</comment>
<comment type="catalytic activity">
    <reaction evidence="1">
        <text>ATP + H2O + cellular proteinSide 1 = ADP + phosphate + cellular proteinSide 2.</text>
        <dbReference type="EC" id="7.4.2.8"/>
    </reaction>
</comment>
<comment type="cofactor">
    <cofactor evidence="1">
        <name>Zn(2+)</name>
        <dbReference type="ChEBI" id="CHEBI:29105"/>
    </cofactor>
    <text evidence="1">May bind 1 zinc ion per subunit.</text>
</comment>
<comment type="subunit">
    <text evidence="1">Monomer and homodimer. Part of the essential Sec protein translocation apparatus which comprises SecA, SecYEG and auxiliary proteins SecDF-YajC and YidC.</text>
</comment>
<comment type="subcellular location">
    <subcellularLocation>
        <location evidence="1">Cell inner membrane</location>
        <topology evidence="1">Peripheral membrane protein</topology>
        <orientation evidence="1">Cytoplasmic side</orientation>
    </subcellularLocation>
    <subcellularLocation>
        <location evidence="1">Cytoplasm</location>
    </subcellularLocation>
    <text evidence="1">Distribution is 50-50.</text>
</comment>
<comment type="induction">
    <text evidence="1">Repressed under conditions of excess protein secretion capacity and derepressed when protein secretion becomes limiting. This is regulated by SecM.</text>
</comment>
<comment type="similarity">
    <text evidence="1">Belongs to the SecA family.</text>
</comment>